<dbReference type="EMBL" id="CP000304">
    <property type="protein sequence ID" value="ABP78472.1"/>
    <property type="molecule type" value="Genomic_DNA"/>
</dbReference>
<dbReference type="RefSeq" id="WP_011911979.1">
    <property type="nucleotide sequence ID" value="NC_009434.1"/>
</dbReference>
<dbReference type="GeneID" id="75213376"/>
<dbReference type="KEGG" id="psa:PST_0775"/>
<dbReference type="eggNOG" id="COG0244">
    <property type="taxonomic scope" value="Bacteria"/>
</dbReference>
<dbReference type="HOGENOM" id="CLU_092227_0_2_6"/>
<dbReference type="Proteomes" id="UP000000233">
    <property type="component" value="Chromosome"/>
</dbReference>
<dbReference type="GO" id="GO:0015934">
    <property type="term" value="C:large ribosomal subunit"/>
    <property type="evidence" value="ECO:0007669"/>
    <property type="project" value="InterPro"/>
</dbReference>
<dbReference type="GO" id="GO:0070180">
    <property type="term" value="F:large ribosomal subunit rRNA binding"/>
    <property type="evidence" value="ECO:0007669"/>
    <property type="project" value="UniProtKB-UniRule"/>
</dbReference>
<dbReference type="GO" id="GO:0003735">
    <property type="term" value="F:structural constituent of ribosome"/>
    <property type="evidence" value="ECO:0007669"/>
    <property type="project" value="InterPro"/>
</dbReference>
<dbReference type="GO" id="GO:0006412">
    <property type="term" value="P:translation"/>
    <property type="evidence" value="ECO:0007669"/>
    <property type="project" value="UniProtKB-UniRule"/>
</dbReference>
<dbReference type="CDD" id="cd05797">
    <property type="entry name" value="Ribosomal_L10"/>
    <property type="match status" value="1"/>
</dbReference>
<dbReference type="FunFam" id="3.30.70.1730:FF:000001">
    <property type="entry name" value="50S ribosomal protein L10"/>
    <property type="match status" value="1"/>
</dbReference>
<dbReference type="Gene3D" id="3.30.70.1730">
    <property type="match status" value="1"/>
</dbReference>
<dbReference type="Gene3D" id="6.10.250.2350">
    <property type="match status" value="1"/>
</dbReference>
<dbReference type="HAMAP" id="MF_00362">
    <property type="entry name" value="Ribosomal_uL10"/>
    <property type="match status" value="1"/>
</dbReference>
<dbReference type="InterPro" id="IPR001790">
    <property type="entry name" value="Ribosomal_uL10"/>
</dbReference>
<dbReference type="InterPro" id="IPR043141">
    <property type="entry name" value="Ribosomal_uL10-like_sf"/>
</dbReference>
<dbReference type="InterPro" id="IPR022973">
    <property type="entry name" value="Ribosomal_uL10_bac"/>
</dbReference>
<dbReference type="InterPro" id="IPR047865">
    <property type="entry name" value="Ribosomal_uL10_bac_type"/>
</dbReference>
<dbReference type="InterPro" id="IPR002363">
    <property type="entry name" value="Ribosomal_uL10_CS_bac"/>
</dbReference>
<dbReference type="NCBIfam" id="NF000955">
    <property type="entry name" value="PRK00099.1-1"/>
    <property type="match status" value="1"/>
</dbReference>
<dbReference type="PANTHER" id="PTHR11560">
    <property type="entry name" value="39S RIBOSOMAL PROTEIN L10, MITOCHONDRIAL"/>
    <property type="match status" value="1"/>
</dbReference>
<dbReference type="Pfam" id="PF00466">
    <property type="entry name" value="Ribosomal_L10"/>
    <property type="match status" value="1"/>
</dbReference>
<dbReference type="SUPFAM" id="SSF160369">
    <property type="entry name" value="Ribosomal protein L10-like"/>
    <property type="match status" value="1"/>
</dbReference>
<dbReference type="PROSITE" id="PS01109">
    <property type="entry name" value="RIBOSOMAL_L10"/>
    <property type="match status" value="1"/>
</dbReference>
<name>RL10_STUS1</name>
<gene>
    <name evidence="1" type="primary">rplJ</name>
    <name type="ordered locus">PST_0775</name>
</gene>
<organism>
    <name type="scientific">Stutzerimonas stutzeri (strain A1501)</name>
    <name type="common">Pseudomonas stutzeri</name>
    <dbReference type="NCBI Taxonomy" id="379731"/>
    <lineage>
        <taxon>Bacteria</taxon>
        <taxon>Pseudomonadati</taxon>
        <taxon>Pseudomonadota</taxon>
        <taxon>Gammaproteobacteria</taxon>
        <taxon>Pseudomonadales</taxon>
        <taxon>Pseudomonadaceae</taxon>
        <taxon>Stutzerimonas</taxon>
    </lineage>
</organism>
<protein>
    <recommendedName>
        <fullName evidence="1">Large ribosomal subunit protein uL10</fullName>
    </recommendedName>
    <alternativeName>
        <fullName evidence="2">50S ribosomal protein L10</fullName>
    </alternativeName>
</protein>
<evidence type="ECO:0000255" key="1">
    <source>
        <dbReference type="HAMAP-Rule" id="MF_00362"/>
    </source>
</evidence>
<evidence type="ECO:0000305" key="2"/>
<keyword id="KW-1185">Reference proteome</keyword>
<keyword id="KW-0687">Ribonucleoprotein</keyword>
<keyword id="KW-0689">Ribosomal protein</keyword>
<keyword id="KW-0694">RNA-binding</keyword>
<keyword id="KW-0699">rRNA-binding</keyword>
<accession>A4VHM1</accession>
<reference key="1">
    <citation type="journal article" date="2008" name="Proc. Natl. Acad. Sci. U.S.A.">
        <title>Nitrogen fixation island and rhizosphere competence traits in the genome of root-associated Pseudomonas stutzeri A1501.</title>
        <authorList>
            <person name="Yan Y."/>
            <person name="Yang J."/>
            <person name="Dou Y."/>
            <person name="Chen M."/>
            <person name="Ping S."/>
            <person name="Peng J."/>
            <person name="Lu W."/>
            <person name="Zhang W."/>
            <person name="Yao Z."/>
            <person name="Li H."/>
            <person name="Liu W."/>
            <person name="He S."/>
            <person name="Geng L."/>
            <person name="Zhang X."/>
            <person name="Yang F."/>
            <person name="Yu H."/>
            <person name="Zhan Y."/>
            <person name="Li D."/>
            <person name="Lin Z."/>
            <person name="Wang Y."/>
            <person name="Elmerich C."/>
            <person name="Lin M."/>
            <person name="Jin Q."/>
        </authorList>
    </citation>
    <scope>NUCLEOTIDE SEQUENCE [LARGE SCALE GENOMIC DNA]</scope>
    <source>
        <strain>A1501</strain>
    </source>
</reference>
<feature type="chain" id="PRO_1000005565" description="Large ribosomal subunit protein uL10">
    <location>
        <begin position="1"/>
        <end position="166"/>
    </location>
</feature>
<sequence>MAIKLEDKKAIVAEVNEAAKAGLSAVVADARGVTVGAMTGLRKEARAAGVYVKVVRNTLLKRAVEGTQFDVLNDVFKGPTLIAFSNEHPGAAARIFKEFAKGQDKFEIKAAAFEGKFLAANQIDVLASLPTREEGIAQLMSVIQGATSKLARTLAAIRDQKEAAAA</sequence>
<comment type="function">
    <text evidence="1">Forms part of the ribosomal stalk, playing a central role in the interaction of the ribosome with GTP-bound translation factors.</text>
</comment>
<comment type="subunit">
    <text evidence="1">Part of the ribosomal stalk of the 50S ribosomal subunit. The N-terminus interacts with L11 and the large rRNA to form the base of the stalk. The C-terminus forms an elongated spine to which L12 dimers bind in a sequential fashion forming a multimeric L10(L12)X complex.</text>
</comment>
<comment type="similarity">
    <text evidence="1">Belongs to the universal ribosomal protein uL10 family.</text>
</comment>
<proteinExistence type="inferred from homology"/>